<evidence type="ECO:0000255" key="1">
    <source>
        <dbReference type="PROSITE-ProRule" id="PRU00176"/>
    </source>
</evidence>
<evidence type="ECO:0000256" key="2">
    <source>
        <dbReference type="SAM" id="MobiDB-lite"/>
    </source>
</evidence>
<evidence type="ECO:0000269" key="3">
    <source>
    </source>
</evidence>
<evidence type="ECO:0000303" key="4">
    <source>
    </source>
</evidence>
<reference key="1">
    <citation type="journal article" date="1998" name="Development">
        <title>The Ceratitis capitata homologue of the Drosophila sex-determining gene Sex-lethal is structurally conserved, but not sex-specifically regulated.</title>
        <authorList>
            <person name="Saccone G."/>
            <person name="Peluso I."/>
            <person name="Artiaco D."/>
            <person name="Giordano E."/>
            <person name="Bopp D."/>
            <person name="Polito L.C."/>
        </authorList>
    </citation>
    <scope>NUCLEOTIDE SEQUENCE [MRNA] (ISOFORMS A1 AND E3)</scope>
    <scope>FUNCTION</scope>
    <source>
        <strain>Benakeion</strain>
    </source>
</reference>
<comment type="function">
    <text evidence="3">Unknown; apparently not involved in somatic sex determination.</text>
</comment>
<comment type="subcellular location">
    <subcellularLocation>
        <location evidence="3">Nucleus</location>
    </subcellularLocation>
</comment>
<comment type="alternative products">
    <event type="alternative splicing"/>
    <isoform>
        <id>O61374-1</id>
        <name>E3</name>
        <sequence type="displayed"/>
    </isoform>
    <isoform>
        <id>O61374-2</id>
        <name>A1</name>
        <sequence type="described" ref="VSP_005880"/>
    </isoform>
    <isoform>
        <id>O61374-3</id>
        <name>A2</name>
        <sequence type="not described"/>
    </isoform>
    <isoform>
        <id>O61374-4</id>
        <name>A3</name>
        <sequence type="not described"/>
    </isoform>
    <isoform>
        <id>O61374-5</id>
        <name>A4</name>
        <sequence type="not described"/>
    </isoform>
    <isoform>
        <id>O61374-6</id>
        <name>E1</name>
        <sequence type="not described"/>
    </isoform>
    <isoform>
        <id>O61374-7</id>
        <name>E2</name>
        <sequence type="not described"/>
    </isoform>
</comment>
<comment type="developmental stage">
    <text evidence="3">Expressed in embryos of both sexes. Also expressed in the progenitor cells of the germline.</text>
</comment>
<comment type="miscellaneous">
    <molecule>Isoform E3</molecule>
    <text evidence="3">Embryo specific.</text>
</comment>
<comment type="miscellaneous">
    <molecule>Isoform A1</molecule>
    <text evidence="3">Adult specific.</text>
</comment>
<comment type="miscellaneous">
    <molecule>Isoform A2</molecule>
    <text evidence="3">Adult specific.</text>
</comment>
<comment type="miscellaneous">
    <molecule>Isoform A3</molecule>
    <text evidence="3">Adult specific.</text>
</comment>
<comment type="miscellaneous">
    <molecule>Isoform A4</molecule>
    <text evidence="3">Adult specific.</text>
</comment>
<comment type="miscellaneous">
    <molecule>Isoform E1</molecule>
    <text evidence="3">Embryo specific.</text>
</comment>
<comment type="miscellaneous">
    <molecule>Isoform E2</molecule>
    <text evidence="3">Embryo specific.</text>
</comment>
<organism>
    <name type="scientific">Ceratitis capitata</name>
    <name type="common">Mediterranean fruit fly</name>
    <name type="synonym">Tephritis capitata</name>
    <dbReference type="NCBI Taxonomy" id="7213"/>
    <lineage>
        <taxon>Eukaryota</taxon>
        <taxon>Metazoa</taxon>
        <taxon>Ecdysozoa</taxon>
        <taxon>Arthropoda</taxon>
        <taxon>Hexapoda</taxon>
        <taxon>Insecta</taxon>
        <taxon>Pterygota</taxon>
        <taxon>Neoptera</taxon>
        <taxon>Endopterygota</taxon>
        <taxon>Diptera</taxon>
        <taxon>Brachycera</taxon>
        <taxon>Muscomorpha</taxon>
        <taxon>Tephritoidea</taxon>
        <taxon>Tephritidae</taxon>
        <taxon>Ceratitis</taxon>
        <taxon>Ceratitis</taxon>
    </lineage>
</organism>
<name>SXL_CERCA</name>
<accession>O61374</accession>
<dbReference type="EMBL" id="AF026145">
    <property type="protein sequence ID" value="AAC38968.1"/>
    <property type="molecule type" value="mRNA"/>
</dbReference>
<dbReference type="RefSeq" id="NP_001266336.1">
    <molecule id="O61374-2"/>
    <property type="nucleotide sequence ID" value="NM_001279407.1"/>
</dbReference>
<dbReference type="SMR" id="O61374"/>
<dbReference type="EnsemblMetazoa" id="NM_001279407.1">
    <molecule id="O61374-2"/>
    <property type="protein sequence ID" value="NP_001266336.1"/>
    <property type="gene ID" value="LOC101454489"/>
</dbReference>
<dbReference type="GeneID" id="101454489"/>
<dbReference type="KEGG" id="ccat:101454489"/>
<dbReference type="OrthoDB" id="266020at2759"/>
<dbReference type="GO" id="GO:0005634">
    <property type="term" value="C:nucleus"/>
    <property type="evidence" value="ECO:0007669"/>
    <property type="project" value="UniProtKB-SubCell"/>
</dbReference>
<dbReference type="GO" id="GO:1990904">
    <property type="term" value="C:ribonucleoprotein complex"/>
    <property type="evidence" value="ECO:0007669"/>
    <property type="project" value="InterPro"/>
</dbReference>
<dbReference type="GO" id="GO:0003729">
    <property type="term" value="F:mRNA binding"/>
    <property type="evidence" value="ECO:0007669"/>
    <property type="project" value="TreeGrafter"/>
</dbReference>
<dbReference type="GO" id="GO:0000380">
    <property type="term" value="P:alternative mRNA splicing, via spliceosome"/>
    <property type="evidence" value="ECO:0007669"/>
    <property type="project" value="InterPro"/>
</dbReference>
<dbReference type="GO" id="GO:0007530">
    <property type="term" value="P:sex determination"/>
    <property type="evidence" value="ECO:0007669"/>
    <property type="project" value="InterPro"/>
</dbReference>
<dbReference type="CDD" id="cd12649">
    <property type="entry name" value="RRM1_SXL"/>
    <property type="match status" value="1"/>
</dbReference>
<dbReference type="CDD" id="cd12376">
    <property type="entry name" value="RRM2_Hu_like"/>
    <property type="match status" value="1"/>
</dbReference>
<dbReference type="FunFam" id="3.30.70.330:FF:000205">
    <property type="entry name" value="Sex lethal, isoform B"/>
    <property type="match status" value="1"/>
</dbReference>
<dbReference type="FunFam" id="3.30.70.330:FF:000383">
    <property type="entry name" value="Sex lethal, isoform D"/>
    <property type="match status" value="1"/>
</dbReference>
<dbReference type="Gene3D" id="3.30.70.330">
    <property type="match status" value="2"/>
</dbReference>
<dbReference type="InterPro" id="IPR050502">
    <property type="entry name" value="Euk_RNA-bind_prot"/>
</dbReference>
<dbReference type="InterPro" id="IPR002343">
    <property type="entry name" value="Hud_Sxl_RNA"/>
</dbReference>
<dbReference type="InterPro" id="IPR012677">
    <property type="entry name" value="Nucleotide-bd_a/b_plait_sf"/>
</dbReference>
<dbReference type="InterPro" id="IPR035979">
    <property type="entry name" value="RBD_domain_sf"/>
</dbReference>
<dbReference type="InterPro" id="IPR000504">
    <property type="entry name" value="RRM_dom"/>
</dbReference>
<dbReference type="InterPro" id="IPR006546">
    <property type="entry name" value="Sxl"/>
</dbReference>
<dbReference type="NCBIfam" id="TIGR01659">
    <property type="entry name" value="sex-lethal"/>
    <property type="match status" value="1"/>
</dbReference>
<dbReference type="PANTHER" id="PTHR48025">
    <property type="entry name" value="OS02G0815200 PROTEIN"/>
    <property type="match status" value="1"/>
</dbReference>
<dbReference type="PANTHER" id="PTHR48025:SF1">
    <property type="entry name" value="RRM DOMAIN-CONTAINING PROTEIN"/>
    <property type="match status" value="1"/>
</dbReference>
<dbReference type="Pfam" id="PF00076">
    <property type="entry name" value="RRM_1"/>
    <property type="match status" value="2"/>
</dbReference>
<dbReference type="PRINTS" id="PR00961">
    <property type="entry name" value="HUDSXLRNA"/>
</dbReference>
<dbReference type="SMART" id="SM00360">
    <property type="entry name" value="RRM"/>
    <property type="match status" value="2"/>
</dbReference>
<dbReference type="SUPFAM" id="SSF54928">
    <property type="entry name" value="RNA-binding domain, RBD"/>
    <property type="match status" value="2"/>
</dbReference>
<dbReference type="PROSITE" id="PS50102">
    <property type="entry name" value="RRM"/>
    <property type="match status" value="2"/>
</dbReference>
<keyword id="KW-0025">Alternative splicing</keyword>
<keyword id="KW-0539">Nucleus</keyword>
<keyword id="KW-0677">Repeat</keyword>
<keyword id="KW-0694">RNA-binding</keyword>
<proteinExistence type="evidence at transcript level"/>
<gene>
    <name type="primary">SXL</name>
</gene>
<feature type="chain" id="PRO_0000081965" description="Sex-lethal homolog">
    <location>
        <begin position="1"/>
        <end position="348"/>
    </location>
</feature>
<feature type="domain" description="RRM 1" evidence="1">
    <location>
        <begin position="110"/>
        <end position="188"/>
    </location>
</feature>
<feature type="domain" description="RRM 2" evidence="1">
    <location>
        <begin position="196"/>
        <end position="276"/>
    </location>
</feature>
<feature type="region of interest" description="Disordered" evidence="2">
    <location>
        <begin position="296"/>
        <end position="317"/>
    </location>
</feature>
<feature type="compositionally biased region" description="Gly residues" evidence="2">
    <location>
        <begin position="296"/>
        <end position="310"/>
    </location>
</feature>
<feature type="splice variant" id="VSP_005880" description="In isoform A1." evidence="4">
    <location>
        <begin position="37"/>
        <end position="44"/>
    </location>
</feature>
<sequence>MYGNMNNGGHAPYGYNGYRPSGGRMWGMSHSLPSGMSRYAFSPEDTDFTSSYPGPSMNRRGGYNDFSGGGGGGGGTMGSMNNMVNAASTNSLNCGGGGGRDGHGGGSNGTNLIVNYLPQDMTDRELYALFRTIGPINTCRIMRDYKTGYSFGYAFVDFAAETDSQRAIKSLNGITVRNKRLKVSYARPGGESIKDTNLYVTNLPRTITDDQLDTIFGKYGMIVQKNILRDKLTGKPRGVAFVRFNKREEAQEAISALNNVIPEGASQPLTVRLAEEHGKAKAQHYMSQLGLIGGGGGGGGGGGGGGGGMGGPPPPPMNMGYNNMVHRGRQNKSRFQKMHPYHNAQKFI</sequence>
<protein>
    <recommendedName>
        <fullName>Sex-lethal homolog</fullName>
    </recommendedName>
    <alternativeName>
        <fullName>CCSXL</fullName>
    </alternativeName>
</protein>